<protein>
    <recommendedName>
        <fullName evidence="1">Protoheme IX farnesyltransferase</fullName>
        <ecNumber evidence="1">2.5.1.141</ecNumber>
    </recommendedName>
    <alternativeName>
        <fullName evidence="1">Heme B farnesyltransferase</fullName>
    </alternativeName>
    <alternativeName>
        <fullName evidence="1">Heme O synthase</fullName>
    </alternativeName>
</protein>
<sequence length="303" mass="33620">MNKDQTLSHTTGRVSFKELQQIIKMGLVQGNLIPAFAGAWLAIVMTNHSFLSSIPQILLMLVGSTLIMGGACALNNYYDQDIDRIMPSKQGRPTVNDRISDRNLLMLSFGMMLIGEACLFLLNIPSGVLGLIGIVGYVSYYSIWSKRHTTWNTVVGSFPGAVPPLIGWVAIDGSLSLAAVALFLVVFCWQPIHFYALAIKRSDEYALANIPMLPSVKGFKRTRVSMFIWLVLLLPLPFLLSNLGVTFVVIATLLNLGWLALGFTTFRKESNQTKWATQMFVYSLNYLVVFFALVVVVSLIKMI</sequence>
<reference key="1">
    <citation type="journal article" date="2003" name="Mol. Microbiol.">
        <title>Genome-based analysis of virulence genes in a non-biofilm-forming Staphylococcus epidermidis strain (ATCC 12228).</title>
        <authorList>
            <person name="Zhang Y.-Q."/>
            <person name="Ren S.-X."/>
            <person name="Li H.-L."/>
            <person name="Wang Y.-X."/>
            <person name="Fu G."/>
            <person name="Yang J."/>
            <person name="Qin Z.-Q."/>
            <person name="Miao Y.-G."/>
            <person name="Wang W.-Y."/>
            <person name="Chen R.-S."/>
            <person name="Shen Y."/>
            <person name="Chen Z."/>
            <person name="Yuan Z.-H."/>
            <person name="Zhao G.-P."/>
            <person name="Qu D."/>
            <person name="Danchin A."/>
            <person name="Wen Y.-M."/>
        </authorList>
    </citation>
    <scope>NUCLEOTIDE SEQUENCE [LARGE SCALE GENOMIC DNA]</scope>
    <source>
        <strain>ATCC 12228 / FDA PCI 1200</strain>
    </source>
</reference>
<keyword id="KW-1003">Cell membrane</keyword>
<keyword id="KW-0350">Heme biosynthesis</keyword>
<keyword id="KW-0472">Membrane</keyword>
<keyword id="KW-0808">Transferase</keyword>
<keyword id="KW-0812">Transmembrane</keyword>
<keyword id="KW-1133">Transmembrane helix</keyword>
<evidence type="ECO:0000255" key="1">
    <source>
        <dbReference type="HAMAP-Rule" id="MF_00154"/>
    </source>
</evidence>
<evidence type="ECO:0000305" key="2"/>
<name>COXX_STAES</name>
<comment type="function">
    <text evidence="1">Converts heme B (protoheme IX) to heme O by substitution of the vinyl group on carbon 2 of heme B porphyrin ring with a hydroxyethyl farnesyl side group.</text>
</comment>
<comment type="catalytic activity">
    <reaction evidence="1">
        <text>heme b + (2E,6E)-farnesyl diphosphate + H2O = Fe(II)-heme o + diphosphate</text>
        <dbReference type="Rhea" id="RHEA:28070"/>
        <dbReference type="ChEBI" id="CHEBI:15377"/>
        <dbReference type="ChEBI" id="CHEBI:33019"/>
        <dbReference type="ChEBI" id="CHEBI:60344"/>
        <dbReference type="ChEBI" id="CHEBI:60530"/>
        <dbReference type="ChEBI" id="CHEBI:175763"/>
        <dbReference type="EC" id="2.5.1.141"/>
    </reaction>
</comment>
<comment type="pathway">
    <text evidence="1">Porphyrin-containing compound metabolism; heme O biosynthesis; heme O from protoheme: step 1/1.</text>
</comment>
<comment type="subunit">
    <text evidence="1">Interacts with CtaA.</text>
</comment>
<comment type="subcellular location">
    <subcellularLocation>
        <location evidence="1">Cell membrane</location>
        <topology evidence="1">Multi-pass membrane protein</topology>
    </subcellularLocation>
</comment>
<comment type="miscellaneous">
    <text evidence="1">Carbon 2 of the heme B porphyrin ring is defined according to the Fischer nomenclature.</text>
</comment>
<comment type="similarity">
    <text evidence="1">Belongs to the UbiA prenyltransferase family. Protoheme IX farnesyltransferase subfamily.</text>
</comment>
<comment type="sequence caution" evidence="2">
    <conflict type="erroneous initiation">
        <sequence resource="EMBL-CDS" id="AAO04412"/>
    </conflict>
</comment>
<proteinExistence type="inferred from homology"/>
<accession>Q8CPM1</accession>
<gene>
    <name evidence="1" type="primary">ctaB</name>
    <name type="ordered locus">SE_0815</name>
</gene>
<dbReference type="EC" id="2.5.1.141" evidence="1"/>
<dbReference type="EMBL" id="AE015929">
    <property type="protein sequence ID" value="AAO04412.1"/>
    <property type="status" value="ALT_INIT"/>
    <property type="molecule type" value="Genomic_DNA"/>
</dbReference>
<dbReference type="RefSeq" id="NP_764370.1">
    <property type="nucleotide sequence ID" value="NC_004461.1"/>
</dbReference>
<dbReference type="SMR" id="Q8CPM1"/>
<dbReference type="KEGG" id="sep:SE_0815"/>
<dbReference type="PATRIC" id="fig|176280.10.peg.790"/>
<dbReference type="eggNOG" id="COG0109">
    <property type="taxonomic scope" value="Bacteria"/>
</dbReference>
<dbReference type="HOGENOM" id="CLU_029631_0_0_9"/>
<dbReference type="OrthoDB" id="9814417at2"/>
<dbReference type="UniPathway" id="UPA00834">
    <property type="reaction ID" value="UER00712"/>
</dbReference>
<dbReference type="Proteomes" id="UP000001411">
    <property type="component" value="Chromosome"/>
</dbReference>
<dbReference type="GO" id="GO:0005886">
    <property type="term" value="C:plasma membrane"/>
    <property type="evidence" value="ECO:0007669"/>
    <property type="project" value="UniProtKB-SubCell"/>
</dbReference>
<dbReference type="GO" id="GO:0008495">
    <property type="term" value="F:protoheme IX farnesyltransferase activity"/>
    <property type="evidence" value="ECO:0007669"/>
    <property type="project" value="UniProtKB-UniRule"/>
</dbReference>
<dbReference type="GO" id="GO:0048034">
    <property type="term" value="P:heme O biosynthetic process"/>
    <property type="evidence" value="ECO:0007669"/>
    <property type="project" value="UniProtKB-UniRule"/>
</dbReference>
<dbReference type="CDD" id="cd13957">
    <property type="entry name" value="PT_UbiA_Cox10"/>
    <property type="match status" value="1"/>
</dbReference>
<dbReference type="Gene3D" id="1.10.357.140">
    <property type="entry name" value="UbiA prenyltransferase"/>
    <property type="match status" value="1"/>
</dbReference>
<dbReference type="HAMAP" id="MF_00154">
    <property type="entry name" value="CyoE_CtaB"/>
    <property type="match status" value="1"/>
</dbReference>
<dbReference type="InterPro" id="IPR006369">
    <property type="entry name" value="Protohaem_IX_farnesylTrfase"/>
</dbReference>
<dbReference type="InterPro" id="IPR000537">
    <property type="entry name" value="UbiA_prenyltransferase"/>
</dbReference>
<dbReference type="InterPro" id="IPR044878">
    <property type="entry name" value="UbiA_sf"/>
</dbReference>
<dbReference type="NCBIfam" id="TIGR01473">
    <property type="entry name" value="cyoE_ctaB"/>
    <property type="match status" value="1"/>
</dbReference>
<dbReference type="PANTHER" id="PTHR43448">
    <property type="entry name" value="PROTOHEME IX FARNESYLTRANSFERASE, MITOCHONDRIAL"/>
    <property type="match status" value="1"/>
</dbReference>
<dbReference type="PANTHER" id="PTHR43448:SF2">
    <property type="entry name" value="PROTOHEME IX FARNESYLTRANSFERASE, MITOCHONDRIAL"/>
    <property type="match status" value="1"/>
</dbReference>
<dbReference type="Pfam" id="PF01040">
    <property type="entry name" value="UbiA"/>
    <property type="match status" value="1"/>
</dbReference>
<organism>
    <name type="scientific">Staphylococcus epidermidis (strain ATCC 12228 / FDA PCI 1200)</name>
    <dbReference type="NCBI Taxonomy" id="176280"/>
    <lineage>
        <taxon>Bacteria</taxon>
        <taxon>Bacillati</taxon>
        <taxon>Bacillota</taxon>
        <taxon>Bacilli</taxon>
        <taxon>Bacillales</taxon>
        <taxon>Staphylococcaceae</taxon>
        <taxon>Staphylococcus</taxon>
    </lineage>
</organism>
<feature type="chain" id="PRO_0000327164" description="Protoheme IX farnesyltransferase">
    <location>
        <begin position="1"/>
        <end position="303"/>
    </location>
</feature>
<feature type="transmembrane region" description="Helical" evidence="1">
    <location>
        <begin position="25"/>
        <end position="45"/>
    </location>
</feature>
<feature type="transmembrane region" description="Helical" evidence="1">
    <location>
        <begin position="54"/>
        <end position="74"/>
    </location>
</feature>
<feature type="transmembrane region" description="Helical" evidence="1">
    <location>
        <begin position="118"/>
        <end position="138"/>
    </location>
</feature>
<feature type="transmembrane region" description="Helical" evidence="1">
    <location>
        <begin position="166"/>
        <end position="186"/>
    </location>
</feature>
<feature type="transmembrane region" description="Helical" evidence="1">
    <location>
        <begin position="230"/>
        <end position="250"/>
    </location>
</feature>
<feature type="transmembrane region" description="Helical" evidence="1">
    <location>
        <begin position="280"/>
        <end position="300"/>
    </location>
</feature>